<feature type="chain" id="PRO_0000171272" description="o-succinylbenzoate synthase">
    <location>
        <begin position="1"/>
        <end position="329"/>
    </location>
</feature>
<feature type="active site" description="Proton donor" evidence="1">
    <location>
        <position position="140"/>
    </location>
</feature>
<feature type="active site" description="Proton acceptor" evidence="1">
    <location>
        <position position="242"/>
    </location>
</feature>
<feature type="binding site" evidence="1">
    <location>
        <position position="168"/>
    </location>
    <ligand>
        <name>Mg(2+)</name>
        <dbReference type="ChEBI" id="CHEBI:18420"/>
    </ligand>
</feature>
<feature type="binding site" evidence="1">
    <location>
        <position position="197"/>
    </location>
    <ligand>
        <name>Mg(2+)</name>
        <dbReference type="ChEBI" id="CHEBI:18420"/>
    </ligand>
</feature>
<feature type="binding site" evidence="1">
    <location>
        <position position="220"/>
    </location>
    <ligand>
        <name>Mg(2+)</name>
        <dbReference type="ChEBI" id="CHEBI:18420"/>
    </ligand>
</feature>
<organism>
    <name type="scientific">Haemophilus influenzae (strain ATCC 51907 / DSM 11121 / KW20 / Rd)</name>
    <dbReference type="NCBI Taxonomy" id="71421"/>
    <lineage>
        <taxon>Bacteria</taxon>
        <taxon>Pseudomonadati</taxon>
        <taxon>Pseudomonadota</taxon>
        <taxon>Gammaproteobacteria</taxon>
        <taxon>Pasteurellales</taxon>
        <taxon>Pasteurellaceae</taxon>
        <taxon>Haemophilus</taxon>
    </lineage>
</organism>
<accession>P44961</accession>
<comment type="function">
    <text evidence="1">Converts 2-succinyl-6-hydroxy-2,4-cyclohexadiene-1-carboxylate (SHCHC) to 2-succinylbenzoate (OSB).</text>
</comment>
<comment type="catalytic activity">
    <reaction evidence="1">
        <text>(1R,6R)-6-hydroxy-2-succinyl-cyclohexa-2,4-diene-1-carboxylate = 2-succinylbenzoate + H2O</text>
        <dbReference type="Rhea" id="RHEA:10196"/>
        <dbReference type="ChEBI" id="CHEBI:15377"/>
        <dbReference type="ChEBI" id="CHEBI:18325"/>
        <dbReference type="ChEBI" id="CHEBI:58689"/>
        <dbReference type="EC" id="4.2.1.113"/>
    </reaction>
</comment>
<comment type="cofactor">
    <cofactor evidence="1">
        <name>a divalent metal cation</name>
        <dbReference type="ChEBI" id="CHEBI:60240"/>
    </cofactor>
</comment>
<comment type="pathway">
    <text evidence="1">Quinol/quinone metabolism; 1,4-dihydroxy-2-naphthoate biosynthesis; 1,4-dihydroxy-2-naphthoate from chorismate: step 4/7.</text>
</comment>
<comment type="pathway">
    <text evidence="1">Quinol/quinone metabolism; menaquinone biosynthesis.</text>
</comment>
<comment type="similarity">
    <text evidence="1">Belongs to the mandelate racemase/muconate lactonizing enzyme family. MenC type 1 subfamily.</text>
</comment>
<comment type="sequence caution" evidence="2">
    <conflict type="erroneous initiation">
        <sequence resource="EMBL-CDS" id="AAC22626"/>
    </conflict>
</comment>
<keyword id="KW-0456">Lyase</keyword>
<keyword id="KW-0460">Magnesium</keyword>
<keyword id="KW-0474">Menaquinone biosynthesis</keyword>
<keyword id="KW-0479">Metal-binding</keyword>
<keyword id="KW-1185">Reference proteome</keyword>
<reference key="1">
    <citation type="journal article" date="1995" name="Science">
        <title>Whole-genome random sequencing and assembly of Haemophilus influenzae Rd.</title>
        <authorList>
            <person name="Fleischmann R.D."/>
            <person name="Adams M.D."/>
            <person name="White O."/>
            <person name="Clayton R.A."/>
            <person name="Kirkness E.F."/>
            <person name="Kerlavage A.R."/>
            <person name="Bult C.J."/>
            <person name="Tomb J.-F."/>
            <person name="Dougherty B.A."/>
            <person name="Merrick J.M."/>
            <person name="McKenney K."/>
            <person name="Sutton G.G."/>
            <person name="FitzHugh W."/>
            <person name="Fields C.A."/>
            <person name="Gocayne J.D."/>
            <person name="Scott J.D."/>
            <person name="Shirley R."/>
            <person name="Liu L.-I."/>
            <person name="Glodek A."/>
            <person name="Kelley J.M."/>
            <person name="Weidman J.F."/>
            <person name="Phillips C.A."/>
            <person name="Spriggs T."/>
            <person name="Hedblom E."/>
            <person name="Cotton M.D."/>
            <person name="Utterback T.R."/>
            <person name="Hanna M.C."/>
            <person name="Nguyen D.T."/>
            <person name="Saudek D.M."/>
            <person name="Brandon R.C."/>
            <person name="Fine L.D."/>
            <person name="Fritchman J.L."/>
            <person name="Fuhrmann J.L."/>
            <person name="Geoghagen N.S.M."/>
            <person name="Gnehm C.L."/>
            <person name="McDonald L.A."/>
            <person name="Small K.V."/>
            <person name="Fraser C.M."/>
            <person name="Smith H.O."/>
            <person name="Venter J.C."/>
        </authorList>
    </citation>
    <scope>NUCLEOTIDE SEQUENCE [LARGE SCALE GENOMIC DNA]</scope>
    <source>
        <strain>ATCC 51907 / DSM 11121 / KW20 / Rd</strain>
    </source>
</reference>
<proteinExistence type="inferred from homology"/>
<protein>
    <recommendedName>
        <fullName evidence="1">o-succinylbenzoate synthase</fullName>
        <shortName evidence="1">OSB synthase</shortName>
        <shortName evidence="1">OSBS</shortName>
        <ecNumber evidence="1">4.2.1.113</ecNumber>
    </recommendedName>
    <alternativeName>
        <fullName evidence="1">4-(2'-carboxyphenyl)-4-oxybutyric acid synthase</fullName>
    </alternativeName>
    <alternativeName>
        <fullName evidence="1">o-succinylbenzoic acid synthase</fullName>
    </alternativeName>
</protein>
<sequence>MAEKSFNLYRYSIPVDSQLILRDRFLKRREGLIVRVSCSRDGWGEIAPLPGFSEETLDQAQEQAIEWLTTWCNASCDAPRVPLDGTYPSVAFGISCAMDEMKGYLQAEGNYHTAPLCYGDPDELYAKLASMEGEKVAKMKVGIYEANRDGLIADMFLEAIPDLQLRLDANRHWSLEKALQFAAKVKLQHRKRIQFLEEPCKTQALSREFAVQTDIAIAWDESVREPNFCLEKEPHLSAVVIKPTLIGSIQRCTELINQAHSLGLKAVISSSIESSLGLSQLARIAQQYTPNVTPGLDTLDLMEYQVLRAWPSSDLPIVDLESEFITKII</sequence>
<name>MENC_HAEIN</name>
<evidence type="ECO:0000255" key="1">
    <source>
        <dbReference type="HAMAP-Rule" id="MF_00470"/>
    </source>
</evidence>
<evidence type="ECO:0000305" key="2"/>
<gene>
    <name evidence="1" type="primary">menC</name>
    <name type="ordered locus">HI_0969</name>
</gene>
<dbReference type="EC" id="4.2.1.113" evidence="1"/>
<dbReference type="EMBL" id="L42023">
    <property type="protein sequence ID" value="AAC22626.1"/>
    <property type="status" value="ALT_INIT"/>
    <property type="molecule type" value="Genomic_DNA"/>
</dbReference>
<dbReference type="PIR" id="C64105">
    <property type="entry name" value="C64105"/>
</dbReference>
<dbReference type="RefSeq" id="NP_439130.2">
    <property type="nucleotide sequence ID" value="NC_000907.1"/>
</dbReference>
<dbReference type="SMR" id="P44961"/>
<dbReference type="STRING" id="71421.HI_0969"/>
<dbReference type="EnsemblBacteria" id="AAC22626">
    <property type="protein sequence ID" value="AAC22626"/>
    <property type="gene ID" value="HI_0969"/>
</dbReference>
<dbReference type="KEGG" id="hin:HI_0969"/>
<dbReference type="PATRIC" id="fig|71421.8.peg.1010"/>
<dbReference type="eggNOG" id="COG1441">
    <property type="taxonomic scope" value="Bacteria"/>
</dbReference>
<dbReference type="HOGENOM" id="CLU_030273_0_1_6"/>
<dbReference type="OrthoDB" id="3725747at2"/>
<dbReference type="PhylomeDB" id="P44961"/>
<dbReference type="UniPathway" id="UPA00079"/>
<dbReference type="UniPathway" id="UPA01057">
    <property type="reaction ID" value="UER00165"/>
</dbReference>
<dbReference type="Proteomes" id="UP000000579">
    <property type="component" value="Chromosome"/>
</dbReference>
<dbReference type="GO" id="GO:0016836">
    <property type="term" value="F:hydro-lyase activity"/>
    <property type="evidence" value="ECO:0000318"/>
    <property type="project" value="GO_Central"/>
</dbReference>
<dbReference type="GO" id="GO:0000287">
    <property type="term" value="F:magnesium ion binding"/>
    <property type="evidence" value="ECO:0007669"/>
    <property type="project" value="UniProtKB-UniRule"/>
</dbReference>
<dbReference type="GO" id="GO:0043748">
    <property type="term" value="F:O-succinylbenzoate synthase activity"/>
    <property type="evidence" value="ECO:0007669"/>
    <property type="project" value="UniProtKB-EC"/>
</dbReference>
<dbReference type="GO" id="GO:0009234">
    <property type="term" value="P:menaquinone biosynthetic process"/>
    <property type="evidence" value="ECO:0000318"/>
    <property type="project" value="GO_Central"/>
</dbReference>
<dbReference type="CDD" id="cd03320">
    <property type="entry name" value="OSBS"/>
    <property type="match status" value="1"/>
</dbReference>
<dbReference type="Gene3D" id="3.20.20.120">
    <property type="entry name" value="Enolase-like C-terminal domain"/>
    <property type="match status" value="1"/>
</dbReference>
<dbReference type="Gene3D" id="3.30.390.10">
    <property type="entry name" value="Enolase-like, N-terminal domain"/>
    <property type="match status" value="1"/>
</dbReference>
<dbReference type="HAMAP" id="MF_00470">
    <property type="entry name" value="MenC_1"/>
    <property type="match status" value="1"/>
</dbReference>
<dbReference type="InterPro" id="IPR036849">
    <property type="entry name" value="Enolase-like_C_sf"/>
</dbReference>
<dbReference type="InterPro" id="IPR029017">
    <property type="entry name" value="Enolase-like_N"/>
</dbReference>
<dbReference type="InterPro" id="IPR029065">
    <property type="entry name" value="Enolase_C-like"/>
</dbReference>
<dbReference type="InterPro" id="IPR013342">
    <property type="entry name" value="Mandelate_racemase_C"/>
</dbReference>
<dbReference type="InterPro" id="IPR010196">
    <property type="entry name" value="OSB_synthase_MenC1"/>
</dbReference>
<dbReference type="InterPro" id="IPR041338">
    <property type="entry name" value="OSBS_N"/>
</dbReference>
<dbReference type="NCBIfam" id="TIGR01927">
    <property type="entry name" value="menC_gam_Gplu"/>
    <property type="match status" value="1"/>
</dbReference>
<dbReference type="NCBIfam" id="NF003473">
    <property type="entry name" value="PRK05105.1"/>
    <property type="match status" value="1"/>
</dbReference>
<dbReference type="PANTHER" id="PTHR48073:SF2">
    <property type="entry name" value="O-SUCCINYLBENZOATE SYNTHASE"/>
    <property type="match status" value="1"/>
</dbReference>
<dbReference type="PANTHER" id="PTHR48073">
    <property type="entry name" value="O-SUCCINYLBENZOATE SYNTHASE-RELATED"/>
    <property type="match status" value="1"/>
</dbReference>
<dbReference type="Pfam" id="PF21508">
    <property type="entry name" value="MenC_N"/>
    <property type="match status" value="1"/>
</dbReference>
<dbReference type="Pfam" id="PF13378">
    <property type="entry name" value="MR_MLE_C"/>
    <property type="match status" value="1"/>
</dbReference>
<dbReference type="SFLD" id="SFLDS00001">
    <property type="entry name" value="Enolase"/>
    <property type="match status" value="1"/>
</dbReference>
<dbReference type="SFLD" id="SFLDF00009">
    <property type="entry name" value="o-succinylbenzoate_synthase"/>
    <property type="match status" value="1"/>
</dbReference>
<dbReference type="SMART" id="SM00922">
    <property type="entry name" value="MR_MLE"/>
    <property type="match status" value="1"/>
</dbReference>
<dbReference type="SUPFAM" id="SSF51604">
    <property type="entry name" value="Enolase C-terminal domain-like"/>
    <property type="match status" value="1"/>
</dbReference>
<dbReference type="SUPFAM" id="SSF54826">
    <property type="entry name" value="Enolase N-terminal domain-like"/>
    <property type="match status" value="1"/>
</dbReference>